<protein>
    <recommendedName>
        <fullName>Phosphocarrier protein HPr</fullName>
    </recommendedName>
    <alternativeName>
        <fullName>Histidine-containing protein</fullName>
    </alternativeName>
</protein>
<feature type="initiator methionine" description="Removed">
    <location>
        <position position="1"/>
    </location>
</feature>
<feature type="chain" id="PRO_0000107862" description="Phosphocarrier protein HPr">
    <location>
        <begin position="2"/>
        <end position="89"/>
    </location>
</feature>
<feature type="domain" description="HPr" evidence="2">
    <location>
        <begin position="2"/>
        <end position="89"/>
    </location>
</feature>
<feature type="active site" description="Pros-phosphohistidine intermediate">
    <location>
        <position position="15"/>
    </location>
</feature>
<feature type="modified residue" description="Phosphoserine; by HPrK/P" evidence="2">
    <location>
        <position position="46"/>
    </location>
</feature>
<feature type="strand" evidence="4">
    <location>
        <begin position="3"/>
        <end position="7"/>
    </location>
</feature>
<feature type="helix" evidence="4">
    <location>
        <begin position="16"/>
        <end position="26"/>
    </location>
</feature>
<feature type="strand" evidence="4">
    <location>
        <begin position="30"/>
        <end position="37"/>
    </location>
</feature>
<feature type="strand" evidence="4">
    <location>
        <begin position="40"/>
        <end position="43"/>
    </location>
</feature>
<feature type="helix" evidence="4">
    <location>
        <begin position="47"/>
        <end position="53"/>
    </location>
</feature>
<feature type="strand" evidence="4">
    <location>
        <begin position="60"/>
        <end position="67"/>
    </location>
</feature>
<feature type="helix" evidence="4">
    <location>
        <begin position="70"/>
        <end position="83"/>
    </location>
</feature>
<evidence type="ECO:0000250" key="1"/>
<evidence type="ECO:0000255" key="2">
    <source>
        <dbReference type="PROSITE-ProRule" id="PRU00681"/>
    </source>
</evidence>
<evidence type="ECO:0000305" key="3"/>
<evidence type="ECO:0007829" key="4">
    <source>
        <dbReference type="PDB" id="1PCH"/>
    </source>
</evidence>
<accession>P45611</accession>
<accession>Q2SRD7</accession>
<organism>
    <name type="scientific">Mycoplasma capricolum subsp. capricolum (strain California kid / ATCC 27343 / NCTC 10154)</name>
    <dbReference type="NCBI Taxonomy" id="340047"/>
    <lineage>
        <taxon>Bacteria</taxon>
        <taxon>Bacillati</taxon>
        <taxon>Mycoplasmatota</taxon>
        <taxon>Mollicutes</taxon>
        <taxon>Mycoplasmataceae</taxon>
        <taxon>Mycoplasma</taxon>
    </lineage>
</organism>
<sequence>MAKFSAIITDKVGLHARPASVLAKEASKFSSNITIIANEKQGNLKSIMNVMAMAIKTGTEITIQADGNDADQAIQAIKQTMIDTALIQG</sequence>
<gene>
    <name type="primary">ptsH</name>
    <name type="ordered locus">MCAP_0716</name>
</gene>
<proteinExistence type="evidence at protein level"/>
<reference key="1">
    <citation type="journal article" date="1993" name="J. Biol. Chem.">
        <title>Unique monocistronic operon (ptsH) in Mycoplasma capricolum encoding the phosphocarrier protein, HPr, of the phosphoenolpyruvate:sugar phosphotransferase system. Cloning, sequencing, and characterization of ptsH.</title>
        <authorList>
            <person name="Zhu P.-P."/>
            <person name="Reizer J."/>
            <person name="Reizer A."/>
            <person name="Peterkofsky A."/>
        </authorList>
    </citation>
    <scope>NUCLEOTIDE SEQUENCE [GENOMIC DNA]</scope>
</reference>
<reference key="2">
    <citation type="submission" date="2005-09" db="EMBL/GenBank/DDBJ databases">
        <authorList>
            <person name="Glass J.I."/>
            <person name="Lartigue C."/>
            <person name="Pfannkoch C."/>
            <person name="Baden-Tillson H."/>
            <person name="Smith H.O."/>
            <person name="Venter J.C."/>
            <person name="Roske K."/>
            <person name="Wise K.S."/>
            <person name="Calcutt M.J."/>
            <person name="Nelson W.C."/>
            <person name="Nierman W.C."/>
        </authorList>
    </citation>
    <scope>NUCLEOTIDE SEQUENCE [LARGE SCALE GENOMIC DNA]</scope>
    <source>
        <strain>California kid / ATCC 27343 / NCTC 10154</strain>
    </source>
</reference>
<reference key="3">
    <citation type="journal article" date="1995" name="Proteins">
        <title>Homology modeling of histidine-containing phosphocarrier protein and eosinophil-derived neurotoxin: construction of models and comparison with experiment.</title>
        <authorList>
            <person name="Church W.B."/>
            <person name="Palmer A."/>
            <person name="Wathey J.C."/>
            <person name="Kitson D.H."/>
        </authorList>
    </citation>
    <scope>3D-STRUCTURE MODELING</scope>
</reference>
<reference key="4">
    <citation type="journal article" date="1995" name="Structure">
        <title>Structural evidence for the evolutionary divergence of mycoplasma from Gram-positive bacteria: the histidine-containing phosphocarrier protein.</title>
        <authorList>
            <person name="Pieper U."/>
            <person name="Kapadia G."/>
            <person name="Zhu P.-P."/>
            <person name="Peterkofsky A."/>
            <person name="Herzberg O."/>
        </authorList>
    </citation>
    <scope>X-RAY CRYSTALLOGRAPHY (1.8 ANGSTROMS)</scope>
</reference>
<keyword id="KW-0002">3D-structure</keyword>
<keyword id="KW-0963">Cytoplasm</keyword>
<keyword id="KW-0597">Phosphoprotein</keyword>
<keyword id="KW-0598">Phosphotransferase system</keyword>
<keyword id="KW-0762">Sugar transport</keyword>
<keyword id="KW-0804">Transcription</keyword>
<keyword id="KW-0805">Transcription regulation</keyword>
<keyword id="KW-0813">Transport</keyword>
<dbReference type="EMBL" id="L22432">
    <property type="protein sequence ID" value="AAA16213.1"/>
    <property type="molecule type" value="Unassigned_DNA"/>
</dbReference>
<dbReference type="EMBL" id="CP000123">
    <property type="protein sequence ID" value="ABC01760.1"/>
    <property type="molecule type" value="Genomic_DNA"/>
</dbReference>
<dbReference type="PIR" id="A49683">
    <property type="entry name" value="A49683"/>
</dbReference>
<dbReference type="RefSeq" id="WP_011387560.1">
    <property type="nucleotide sequence ID" value="NC_007633.1"/>
</dbReference>
<dbReference type="PDB" id="1PCH">
    <property type="method" value="X-ray"/>
    <property type="resolution" value="1.80 A"/>
    <property type="chains" value="A=2-89"/>
</dbReference>
<dbReference type="PDBsum" id="1PCH"/>
<dbReference type="SMR" id="P45611"/>
<dbReference type="GeneID" id="23778330"/>
<dbReference type="KEGG" id="mcp:MCAP_0716"/>
<dbReference type="HOGENOM" id="CLU_136230_2_0_14"/>
<dbReference type="PhylomeDB" id="P45611"/>
<dbReference type="EvolutionaryTrace" id="P45611"/>
<dbReference type="Proteomes" id="UP000001928">
    <property type="component" value="Chromosome"/>
</dbReference>
<dbReference type="GO" id="GO:0005737">
    <property type="term" value="C:cytoplasm"/>
    <property type="evidence" value="ECO:0007669"/>
    <property type="project" value="UniProtKB-SubCell"/>
</dbReference>
<dbReference type="GO" id="GO:0009401">
    <property type="term" value="P:phosphoenolpyruvate-dependent sugar phosphotransferase system"/>
    <property type="evidence" value="ECO:0007669"/>
    <property type="project" value="UniProtKB-KW"/>
</dbReference>
<dbReference type="CDD" id="cd00367">
    <property type="entry name" value="PTS-HPr_like"/>
    <property type="match status" value="1"/>
</dbReference>
<dbReference type="Gene3D" id="3.30.1340.10">
    <property type="entry name" value="HPr-like"/>
    <property type="match status" value="1"/>
</dbReference>
<dbReference type="InterPro" id="IPR050399">
    <property type="entry name" value="HPr"/>
</dbReference>
<dbReference type="InterPro" id="IPR000032">
    <property type="entry name" value="HPr-like"/>
</dbReference>
<dbReference type="InterPro" id="IPR035895">
    <property type="entry name" value="HPr-like_sf"/>
</dbReference>
<dbReference type="InterPro" id="IPR001020">
    <property type="entry name" value="PTS_HPr_His_P_site"/>
</dbReference>
<dbReference type="InterPro" id="IPR002114">
    <property type="entry name" value="PTS_HPr_Ser_P_site"/>
</dbReference>
<dbReference type="NCBIfam" id="TIGR01003">
    <property type="entry name" value="PTS_HPr_family"/>
    <property type="match status" value="1"/>
</dbReference>
<dbReference type="PANTHER" id="PTHR33705">
    <property type="entry name" value="PHOSPHOCARRIER PROTEIN HPR"/>
    <property type="match status" value="1"/>
</dbReference>
<dbReference type="PANTHER" id="PTHR33705:SF2">
    <property type="entry name" value="PHOSPHOCARRIER PROTEIN NPR"/>
    <property type="match status" value="1"/>
</dbReference>
<dbReference type="Pfam" id="PF00381">
    <property type="entry name" value="PTS-HPr"/>
    <property type="match status" value="1"/>
</dbReference>
<dbReference type="PRINTS" id="PR00107">
    <property type="entry name" value="PHOSPHOCPHPR"/>
</dbReference>
<dbReference type="SUPFAM" id="SSF55594">
    <property type="entry name" value="HPr-like"/>
    <property type="match status" value="1"/>
</dbReference>
<dbReference type="PROSITE" id="PS51350">
    <property type="entry name" value="PTS_HPR_DOM"/>
    <property type="match status" value="1"/>
</dbReference>
<dbReference type="PROSITE" id="PS00369">
    <property type="entry name" value="PTS_HPR_HIS"/>
    <property type="match status" value="1"/>
</dbReference>
<dbReference type="PROSITE" id="PS00589">
    <property type="entry name" value="PTS_HPR_SER"/>
    <property type="match status" value="1"/>
</dbReference>
<comment type="function">
    <text>General (non sugar-specific) component of the phosphoenolpyruvate-dependent sugar phosphotransferase system (sugar PTS). This major carbohydrate active-transport system catalyzes the phosphorylation of incoming sugar substrates concomitantly with their translocation across the cell membrane. The phosphoryl group from phosphoenolpyruvate (PEP) is transferred to the phosphoryl carrier protein HPr by enzyme I. Phospho-HPr then transfers it to the PTS EIIA domain.</text>
</comment>
<comment type="function">
    <text evidence="1">P-Ser-HPr interacts with the catabolite control protein A (CcpA), forming a complex that binds to DNA at the catabolite response elements cre, operator sites preceding a large number of catabolite-regulated genes. Thus, P-Ser-HPr is a corepressor in carbon catabolite repression (CCR), a mechanism that allows bacteria to coordinate and optimize the utilization of available carbon sources. P-Ser-HPr also plays a role in inducer exclusion, in which it probably interacts with several non-PTS permeases and inhibits their transport activity (By similarity).</text>
</comment>
<comment type="activity regulation">
    <text evidence="1">Phosphorylation on Ser-46 inhibits the phosphoryl transfer from enzyme I to HPr.</text>
</comment>
<comment type="subcellular location">
    <subcellularLocation>
        <location>Cytoplasm</location>
    </subcellularLocation>
</comment>
<comment type="similarity">
    <text evidence="3">Belongs to the HPr family.</text>
</comment>
<name>PTHP_MYCCT</name>